<protein>
    <recommendedName>
        <fullName evidence="1">Probable cytosol aminopeptidase</fullName>
        <ecNumber evidence="1">3.4.11.1</ecNumber>
    </recommendedName>
    <alternativeName>
        <fullName evidence="1">Leucine aminopeptidase</fullName>
        <shortName evidence="1">LAP</shortName>
        <ecNumber evidence="1">3.4.11.10</ecNumber>
    </alternativeName>
    <alternativeName>
        <fullName evidence="1">Leucyl aminopeptidase</fullName>
    </alternativeName>
</protein>
<evidence type="ECO:0000255" key="1">
    <source>
        <dbReference type="HAMAP-Rule" id="MF_00181"/>
    </source>
</evidence>
<dbReference type="EC" id="3.4.11.1" evidence="1"/>
<dbReference type="EC" id="3.4.11.10" evidence="1"/>
<dbReference type="EMBL" id="AM422018">
    <property type="protein sequence ID" value="CAM11464.1"/>
    <property type="molecule type" value="Genomic_DNA"/>
</dbReference>
<dbReference type="SMR" id="B1V932"/>
<dbReference type="STRING" id="59748.PA0129"/>
<dbReference type="KEGG" id="pal:PA0129"/>
<dbReference type="eggNOG" id="COG0260">
    <property type="taxonomic scope" value="Bacteria"/>
</dbReference>
<dbReference type="Proteomes" id="UP000008323">
    <property type="component" value="Chromosome"/>
</dbReference>
<dbReference type="GO" id="GO:0005737">
    <property type="term" value="C:cytoplasm"/>
    <property type="evidence" value="ECO:0007669"/>
    <property type="project" value="UniProtKB-SubCell"/>
</dbReference>
<dbReference type="GO" id="GO:0030145">
    <property type="term" value="F:manganese ion binding"/>
    <property type="evidence" value="ECO:0007669"/>
    <property type="project" value="UniProtKB-UniRule"/>
</dbReference>
<dbReference type="GO" id="GO:0070006">
    <property type="term" value="F:metalloaminopeptidase activity"/>
    <property type="evidence" value="ECO:0007669"/>
    <property type="project" value="InterPro"/>
</dbReference>
<dbReference type="GO" id="GO:0006508">
    <property type="term" value="P:proteolysis"/>
    <property type="evidence" value="ECO:0007669"/>
    <property type="project" value="UniProtKB-KW"/>
</dbReference>
<dbReference type="CDD" id="cd00433">
    <property type="entry name" value="Peptidase_M17"/>
    <property type="match status" value="1"/>
</dbReference>
<dbReference type="Gene3D" id="3.40.220.10">
    <property type="entry name" value="Leucine Aminopeptidase, subunit E, domain 1"/>
    <property type="match status" value="1"/>
</dbReference>
<dbReference type="Gene3D" id="3.40.630.10">
    <property type="entry name" value="Zn peptidases"/>
    <property type="match status" value="1"/>
</dbReference>
<dbReference type="HAMAP" id="MF_00181">
    <property type="entry name" value="Cytosol_peptidase_M17"/>
    <property type="match status" value="1"/>
</dbReference>
<dbReference type="InterPro" id="IPR011356">
    <property type="entry name" value="Leucine_aapep/pepB"/>
</dbReference>
<dbReference type="InterPro" id="IPR043472">
    <property type="entry name" value="Macro_dom-like"/>
</dbReference>
<dbReference type="InterPro" id="IPR000819">
    <property type="entry name" value="Peptidase_M17_C"/>
</dbReference>
<dbReference type="InterPro" id="IPR023042">
    <property type="entry name" value="Peptidase_M17_leu_NH2_pept"/>
</dbReference>
<dbReference type="InterPro" id="IPR008283">
    <property type="entry name" value="Peptidase_M17_N"/>
</dbReference>
<dbReference type="NCBIfam" id="NF002074">
    <property type="entry name" value="PRK00913.1-4"/>
    <property type="match status" value="1"/>
</dbReference>
<dbReference type="NCBIfam" id="NF002075">
    <property type="entry name" value="PRK00913.2-2"/>
    <property type="match status" value="1"/>
</dbReference>
<dbReference type="NCBIfam" id="NF002077">
    <property type="entry name" value="PRK00913.2-4"/>
    <property type="match status" value="1"/>
</dbReference>
<dbReference type="PANTHER" id="PTHR11963:SF23">
    <property type="entry name" value="CYTOSOL AMINOPEPTIDASE"/>
    <property type="match status" value="1"/>
</dbReference>
<dbReference type="PANTHER" id="PTHR11963">
    <property type="entry name" value="LEUCINE AMINOPEPTIDASE-RELATED"/>
    <property type="match status" value="1"/>
</dbReference>
<dbReference type="Pfam" id="PF00883">
    <property type="entry name" value="Peptidase_M17"/>
    <property type="match status" value="1"/>
</dbReference>
<dbReference type="Pfam" id="PF02789">
    <property type="entry name" value="Peptidase_M17_N"/>
    <property type="match status" value="1"/>
</dbReference>
<dbReference type="PRINTS" id="PR00481">
    <property type="entry name" value="LAMNOPPTDASE"/>
</dbReference>
<dbReference type="SUPFAM" id="SSF52949">
    <property type="entry name" value="Macro domain-like"/>
    <property type="match status" value="1"/>
</dbReference>
<dbReference type="SUPFAM" id="SSF53187">
    <property type="entry name" value="Zn-dependent exopeptidases"/>
    <property type="match status" value="1"/>
</dbReference>
<dbReference type="PROSITE" id="PS00631">
    <property type="entry name" value="CYTOSOL_AP"/>
    <property type="match status" value="1"/>
</dbReference>
<comment type="function">
    <text evidence="1">Presumably involved in the processing and regular turnover of intracellular proteins. Catalyzes the removal of unsubstituted N-terminal amino acids from various peptides.</text>
</comment>
<comment type="catalytic activity">
    <reaction evidence="1">
        <text>Release of an N-terminal amino acid, Xaa-|-Yaa-, in which Xaa is preferably Leu, but may be other amino acids including Pro although not Arg or Lys, and Yaa may be Pro. Amino acid amides and methyl esters are also readily hydrolyzed, but rates on arylamides are exceedingly low.</text>
        <dbReference type="EC" id="3.4.11.1"/>
    </reaction>
</comment>
<comment type="catalytic activity">
    <reaction evidence="1">
        <text>Release of an N-terminal amino acid, preferentially leucine, but not glutamic or aspartic acids.</text>
        <dbReference type="EC" id="3.4.11.10"/>
    </reaction>
</comment>
<comment type="cofactor">
    <cofactor evidence="1">
        <name>Mn(2+)</name>
        <dbReference type="ChEBI" id="CHEBI:29035"/>
    </cofactor>
    <text evidence="1">Binds 2 manganese ions per subunit.</text>
</comment>
<comment type="subcellular location">
    <subcellularLocation>
        <location evidence="1">Cytoplasm</location>
    </subcellularLocation>
</comment>
<comment type="similarity">
    <text evidence="1">Belongs to the peptidase M17 family.</text>
</comment>
<name>AMPA_PHYAS</name>
<proteinExistence type="inferred from homology"/>
<feature type="chain" id="PRO_1000192719" description="Probable cytosol aminopeptidase">
    <location>
        <begin position="1"/>
        <end position="493"/>
    </location>
</feature>
<feature type="active site" evidence="1">
    <location>
        <position position="268"/>
    </location>
</feature>
<feature type="active site" evidence="1">
    <location>
        <position position="342"/>
    </location>
</feature>
<feature type="binding site" evidence="1">
    <location>
        <position position="256"/>
    </location>
    <ligand>
        <name>Mn(2+)</name>
        <dbReference type="ChEBI" id="CHEBI:29035"/>
        <label>2</label>
    </ligand>
</feature>
<feature type="binding site" evidence="1">
    <location>
        <position position="261"/>
    </location>
    <ligand>
        <name>Mn(2+)</name>
        <dbReference type="ChEBI" id="CHEBI:29035"/>
        <label>1</label>
    </ligand>
</feature>
<feature type="binding site" evidence="1">
    <location>
        <position position="261"/>
    </location>
    <ligand>
        <name>Mn(2+)</name>
        <dbReference type="ChEBI" id="CHEBI:29035"/>
        <label>2</label>
    </ligand>
</feature>
<feature type="binding site" evidence="1">
    <location>
        <position position="279"/>
    </location>
    <ligand>
        <name>Mn(2+)</name>
        <dbReference type="ChEBI" id="CHEBI:29035"/>
        <label>2</label>
    </ligand>
</feature>
<feature type="binding site" evidence="1">
    <location>
        <position position="338"/>
    </location>
    <ligand>
        <name>Mn(2+)</name>
        <dbReference type="ChEBI" id="CHEBI:29035"/>
        <label>1</label>
    </ligand>
</feature>
<feature type="binding site" evidence="1">
    <location>
        <position position="340"/>
    </location>
    <ligand>
        <name>Mn(2+)</name>
        <dbReference type="ChEBI" id="CHEBI:29035"/>
        <label>1</label>
    </ligand>
</feature>
<feature type="binding site" evidence="1">
    <location>
        <position position="340"/>
    </location>
    <ligand>
        <name>Mn(2+)</name>
        <dbReference type="ChEBI" id="CHEBI:29035"/>
        <label>2</label>
    </ligand>
</feature>
<organism>
    <name type="scientific">Phytoplasma australiense</name>
    <dbReference type="NCBI Taxonomy" id="59748"/>
    <lineage>
        <taxon>Bacteria</taxon>
        <taxon>Bacillati</taxon>
        <taxon>Mycoplasmatota</taxon>
        <taxon>Mollicutes</taxon>
        <taxon>Acholeplasmatales</taxon>
        <taxon>Acholeplasmataceae</taxon>
        <taxon>Candidatus Phytoplasma</taxon>
        <taxon>16SrXII (Stolbur group)</taxon>
    </lineage>
</organism>
<keyword id="KW-0031">Aminopeptidase</keyword>
<keyword id="KW-0963">Cytoplasm</keyword>
<keyword id="KW-0378">Hydrolase</keyword>
<keyword id="KW-0464">Manganese</keyword>
<keyword id="KW-0479">Metal-binding</keyword>
<keyword id="KW-0645">Protease</keyword>
<keyword id="KW-1185">Reference proteome</keyword>
<sequence length="493" mass="53998">MKIYFKKNYLPSMDVDTAVVLQVEKYENSFGLEAVDPKGVAKKSFLRENFKGVFGTQVKLLYPEGSPVACLQVMGLGKQEEINDQTFLKTGGLCFPQLNKANKVVVFADALGIENQTSQVMHFALGLLLRSYSFKHYHTQKTKNEKNLEITFITENAELCQKEFDDVKAILGGVNLTKELVNEPANILGTNEFVERTQQLQTLGVEVEVLNKETLEKLGMNALLGVAQGSQRPPYLVVMKWLGGNENEKPVAFVGKGVVFDTGGISLKPSNKMEDMKGDMAGAATVVGLMHALAARKAKVNVLGVIGLVENMPGSNAQRPGDIVTSMSGQTIEVINTDAEGRLVLADALWYCKTKLQPKMIIDLATLTGAIVVALGYEYAGLFSNNKELVKQLVHSGEVTEEKVWQFPLGPEYDRLVDGKFADISNCPVGYGAGSITAAQFLKRFVGDDIPWAHIDIAGVASGKKKNEFNSSWASGFGVRLLNHLVKDYYENK</sequence>
<accession>B1V932</accession>
<reference key="1">
    <citation type="journal article" date="2008" name="J. Bacteriol.">
        <title>Comparative genome analysis of 'Candidatus Phytoplasma australiense' (subgroup tuf-Australia I; rp-A) and 'Ca. Phytoplasma asteris' strains OY-M and AY-WB.</title>
        <authorList>
            <person name="Tran-Nguyen L.T."/>
            <person name="Kube M."/>
            <person name="Schneider B."/>
            <person name="Reinhardt R."/>
            <person name="Gibb K.S."/>
        </authorList>
    </citation>
    <scope>NUCLEOTIDE SEQUENCE [LARGE SCALE GENOMIC DNA]</scope>
</reference>
<gene>
    <name evidence="1" type="primary">pepA</name>
    <name type="ordered locus">PA0129</name>
</gene>